<reference key="1">
    <citation type="journal article" date="2003" name="Biochem. Biophys. Res. Commun.">
        <title>A newly identified AMSH-family protein is specifically expressed in haploid stages of testicular germ cells.</title>
        <authorList>
            <person name="Kitajima K."/>
            <person name="Matsumoto K."/>
            <person name="Tahara M."/>
            <person name="Takahashi H."/>
            <person name="Nakamura T."/>
            <person name="Nakamura T."/>
        </authorList>
    </citation>
    <scope>NUCLEOTIDE SEQUENCE [MRNA] (ISOFORMS 1 AND 2)</scope>
    <scope>TISSUE SPECIFICITY</scope>
    <source>
        <tissue>Brain</tissue>
    </source>
</reference>
<reference key="2">
    <citation type="submission" date="1998-01" db="EMBL/GenBank/DDBJ databases">
        <title>Cloning of a gene for the mouse AMSH-like-protein.</title>
        <authorList>
            <person name="Ishii N."/>
            <person name="Sugamura K."/>
        </authorList>
    </citation>
    <scope>NUCLEOTIDE SEQUENCE [MRNA] (ISOFORM 1)</scope>
</reference>
<reference key="3">
    <citation type="journal article" date="2004" name="Genome Res.">
        <title>The status, quality, and expansion of the NIH full-length cDNA project: the Mammalian Gene Collection (MGC).</title>
        <authorList>
            <consortium name="The MGC Project Team"/>
        </authorList>
    </citation>
    <scope>NUCLEOTIDE SEQUENCE [LARGE SCALE MRNA] (ISOFORM 1)</scope>
    <source>
        <strain>Czech II</strain>
        <tissue>Mammary gland</tissue>
    </source>
</reference>
<reference key="4">
    <citation type="journal article" date="2010" name="Cell">
        <title>A tissue-specific atlas of mouse protein phosphorylation and expression.</title>
        <authorList>
            <person name="Huttlin E.L."/>
            <person name="Jedrychowski M.P."/>
            <person name="Elias J.E."/>
            <person name="Goswami T."/>
            <person name="Rad R."/>
            <person name="Beausoleil S.A."/>
            <person name="Villen J."/>
            <person name="Haas W."/>
            <person name="Sowa M.E."/>
            <person name="Gygi S.P."/>
        </authorList>
    </citation>
    <scope>PHOSPHORYLATION [LARGE SCALE ANALYSIS] AT SER-242</scope>
    <scope>IDENTIFICATION BY MASS SPECTROMETRY [LARGE SCALE ANALYSIS]</scope>
    <source>
        <tissue>Pancreas</tissue>
        <tissue>Spleen</tissue>
    </source>
</reference>
<comment type="function">
    <text evidence="2">Zinc metalloprotease that specifically cleaves 'Lys-63'-linked polyubiquitin chains. Acts as a positive regulator of the TORC1 signaling pathway by mediating 'Lys-63'-linked deubiquitination of SESN2, thereby inhibiting SESN2-interaction with the GATOR2 complex. Does not cleave 'Lys-48'-linked polyubiquitin chains.</text>
</comment>
<comment type="cofactor">
    <cofactor evidence="2">
        <name>Zn(2+)</name>
        <dbReference type="ChEBI" id="CHEBI:29105"/>
    </cofactor>
    <text evidence="2">Binds 2 Zn(2+) ions per subunit.</text>
</comment>
<comment type="alternative products">
    <event type="alternative splicing"/>
    <isoform>
        <id>Q76N33-1</id>
        <name>1</name>
        <name>AMSH-FPalpha</name>
        <name>ALM alpha</name>
        <sequence type="displayed"/>
    </isoform>
    <isoform>
        <id>Q76N33-2</id>
        <name>2</name>
        <name>AMSH-FPbeta</name>
        <name>ALM beta</name>
        <sequence type="described" ref="VSP_014649"/>
    </isoform>
</comment>
<comment type="tissue specificity">
    <text evidence="4">Ubiquitously expressed. Isoform 1 is widely expressed while isoform 2 is testis-specific.</text>
</comment>
<comment type="domain">
    <text evidence="1">The JAMM motif is essential for the protease activity.</text>
</comment>
<comment type="similarity">
    <text evidence="6">Belongs to the peptidase M67C family.</text>
</comment>
<comment type="sequence caution" evidence="6">
    <conflict type="erroneous initiation">
        <sequence resource="EMBL-CDS" id="AAH18343"/>
    </conflict>
</comment>
<evidence type="ECO:0000250" key="1">
    <source>
        <dbReference type="UniProtKB" id="O35864"/>
    </source>
</evidence>
<evidence type="ECO:0000250" key="2">
    <source>
        <dbReference type="UniProtKB" id="Q96FJ0"/>
    </source>
</evidence>
<evidence type="ECO:0000255" key="3">
    <source>
        <dbReference type="PROSITE-ProRule" id="PRU01182"/>
    </source>
</evidence>
<evidence type="ECO:0000269" key="4">
    <source>
    </source>
</evidence>
<evidence type="ECO:0000303" key="5">
    <source>
    </source>
</evidence>
<evidence type="ECO:0000305" key="6"/>
<evidence type="ECO:0007744" key="7">
    <source>
    </source>
</evidence>
<feature type="chain" id="PRO_0000194875" description="AMSH-like protease">
    <location>
        <begin position="1"/>
        <end position="436"/>
    </location>
</feature>
<feature type="domain" description="MPN" evidence="3">
    <location>
        <begin position="269"/>
        <end position="397"/>
    </location>
</feature>
<feature type="short sequence motif" description="JAMM motif" evidence="3">
    <location>
        <begin position="347"/>
        <end position="360"/>
    </location>
</feature>
<feature type="binding site" evidence="3">
    <location>
        <position position="347"/>
    </location>
    <ligand>
        <name>Zn(2+)</name>
        <dbReference type="ChEBI" id="CHEBI:29105"/>
        <label>1</label>
        <note>catalytic</note>
    </ligand>
</feature>
<feature type="binding site" evidence="3">
    <location>
        <position position="349"/>
    </location>
    <ligand>
        <name>Zn(2+)</name>
        <dbReference type="ChEBI" id="CHEBI:29105"/>
        <label>1</label>
        <note>catalytic</note>
    </ligand>
</feature>
<feature type="binding site" evidence="3">
    <location>
        <position position="360"/>
    </location>
    <ligand>
        <name>Zn(2+)</name>
        <dbReference type="ChEBI" id="CHEBI:29105"/>
        <label>1</label>
        <note>catalytic</note>
    </ligand>
</feature>
<feature type="binding site" evidence="2">
    <location>
        <position position="362"/>
    </location>
    <ligand>
        <name>Zn(2+)</name>
        <dbReference type="ChEBI" id="CHEBI:29105"/>
        <label>2</label>
    </ligand>
</feature>
<feature type="binding site" evidence="2">
    <location>
        <position position="402"/>
    </location>
    <ligand>
        <name>Zn(2+)</name>
        <dbReference type="ChEBI" id="CHEBI:29105"/>
        <label>2</label>
    </ligand>
</feature>
<feature type="binding site" evidence="2">
    <location>
        <position position="408"/>
    </location>
    <ligand>
        <name>Zn(2+)</name>
        <dbReference type="ChEBI" id="CHEBI:29105"/>
        <label>2</label>
    </ligand>
</feature>
<feature type="binding site" evidence="2">
    <location>
        <position position="410"/>
    </location>
    <ligand>
        <name>Zn(2+)</name>
        <dbReference type="ChEBI" id="CHEBI:29105"/>
        <label>2</label>
    </ligand>
</feature>
<feature type="site" description="Indirect zinc-binding" evidence="2">
    <location>
        <position position="292"/>
    </location>
</feature>
<feature type="modified residue" description="N-acetylmethionine" evidence="2">
    <location>
        <position position="1"/>
    </location>
</feature>
<feature type="modified residue" description="Phosphoserine" evidence="2">
    <location>
        <position position="25"/>
    </location>
</feature>
<feature type="modified residue" description="Phosphoserine" evidence="7">
    <location>
        <position position="242"/>
    </location>
</feature>
<feature type="splice variant" id="VSP_014649" description="In isoform 2." evidence="5">
    <location>
        <begin position="1"/>
        <end position="166"/>
    </location>
</feature>
<feature type="sequence conflict" description="In Ref. 3; AAH18343." evidence="6" ref="3">
    <original>I</original>
    <variation>M</variation>
    <location>
        <position position="194"/>
    </location>
</feature>
<feature type="sequence conflict" description="In Ref. 3; AAH18343." evidence="6" ref="3">
    <original>V</original>
    <variation>M</variation>
    <location>
        <position position="201"/>
    </location>
</feature>
<name>STALP_MOUSE</name>
<proteinExistence type="evidence at protein level"/>
<accession>Q76N33</accession>
<accession>Q76LY0</accession>
<accession>Q8VEK5</accession>
<organism>
    <name type="scientific">Mus musculus</name>
    <name type="common">Mouse</name>
    <dbReference type="NCBI Taxonomy" id="10090"/>
    <lineage>
        <taxon>Eukaryota</taxon>
        <taxon>Metazoa</taxon>
        <taxon>Chordata</taxon>
        <taxon>Craniata</taxon>
        <taxon>Vertebrata</taxon>
        <taxon>Euteleostomi</taxon>
        <taxon>Mammalia</taxon>
        <taxon>Eutheria</taxon>
        <taxon>Euarchontoglires</taxon>
        <taxon>Glires</taxon>
        <taxon>Rodentia</taxon>
        <taxon>Myomorpha</taxon>
        <taxon>Muroidea</taxon>
        <taxon>Muridae</taxon>
        <taxon>Murinae</taxon>
        <taxon>Mus</taxon>
        <taxon>Mus</taxon>
    </lineage>
</organism>
<protein>
    <recommendedName>
        <fullName>AMSH-like protease</fullName>
        <shortName>AMSH-LP</shortName>
        <ecNumber evidence="2">3.4.19.-</ecNumber>
    </recommendedName>
    <alternativeName>
        <fullName>AMSH family protein</fullName>
        <shortName>AMSH-FP</shortName>
    </alternativeName>
    <alternativeName>
        <fullName>STAM-binding protein-like 1</fullName>
    </alternativeName>
</protein>
<gene>
    <name type="primary">Stambpl1</name>
    <name type="synonym">Amshlp</name>
</gene>
<sequence length="436" mass="49640">MEQPFTVNSLKKLAAMPDHTDVSLSPEERVRALSKLGCNISINEDITPRRYFRSGVEMERMASVYLEEGNLENAFVLYNKFITLFVEKLPSHRDYQQCAVPEKQDIMKKLKEIAFPRTDELKTDLLRKYNIEYQEYLQSKNKYKAEILKKLEHQRLIEAERQRIAQMRQQQLESEQFLFFEDQLKKQELARGQIRGQDSPVLSEQTDGSALSCFSTHQSNSLRNAFADHPHKSDGSNFANYSPPVNRALKPAATLSAVQNLVVEGLRCVVLSRDLCHKFLLLADSNTVRGIETCGILCGKLTHNEFTITHVVVPKQSAGPDYCDVENVEELFNVQDQHGLLTLGWIHTHPTQTAFLSSVDLHTHCSYQLMLPEAIAIVCSPKHKDTGIFRLTNAGMLEVSTCKKKGFHPHTKDPKLFSICSHVLVKDIKTTVLDLR</sequence>
<keyword id="KW-0007">Acetylation</keyword>
<keyword id="KW-0025">Alternative splicing</keyword>
<keyword id="KW-0378">Hydrolase</keyword>
<keyword id="KW-0479">Metal-binding</keyword>
<keyword id="KW-0482">Metalloprotease</keyword>
<keyword id="KW-0597">Phosphoprotein</keyword>
<keyword id="KW-0645">Protease</keyword>
<keyword id="KW-1185">Reference proteome</keyword>
<keyword id="KW-0833">Ubl conjugation pathway</keyword>
<keyword id="KW-0862">Zinc</keyword>
<dbReference type="EC" id="3.4.19.-" evidence="2"/>
<dbReference type="EMBL" id="AB066211">
    <property type="protein sequence ID" value="BAD00166.1"/>
    <property type="molecule type" value="mRNA"/>
</dbReference>
<dbReference type="EMBL" id="AB066212">
    <property type="protein sequence ID" value="BAD00167.1"/>
    <property type="molecule type" value="mRNA"/>
</dbReference>
<dbReference type="EMBL" id="AB066213">
    <property type="protein sequence ID" value="BAD00168.1"/>
    <property type="molecule type" value="mRNA"/>
</dbReference>
<dbReference type="EMBL" id="AB010121">
    <property type="protein sequence ID" value="BAD06408.1"/>
    <property type="molecule type" value="mRNA"/>
</dbReference>
<dbReference type="EMBL" id="AB010122">
    <property type="protein sequence ID" value="BAD06409.1"/>
    <property type="molecule type" value="mRNA"/>
</dbReference>
<dbReference type="EMBL" id="BC018343">
    <property type="protein sequence ID" value="AAH18343.1"/>
    <property type="status" value="ALT_INIT"/>
    <property type="molecule type" value="mRNA"/>
</dbReference>
<dbReference type="CCDS" id="CCDS29756.1">
    <molecule id="Q76N33-1"/>
</dbReference>
<dbReference type="RefSeq" id="NP_001347645.1">
    <molecule id="Q76N33-1"/>
    <property type="nucleotide sequence ID" value="NM_001360716.1"/>
</dbReference>
<dbReference type="RefSeq" id="NP_001347646.1">
    <molecule id="Q76N33-1"/>
    <property type="nucleotide sequence ID" value="NM_001360717.1"/>
</dbReference>
<dbReference type="RefSeq" id="NP_001347647.1">
    <molecule id="Q76N33-1"/>
    <property type="nucleotide sequence ID" value="NM_001360718.1"/>
</dbReference>
<dbReference type="RefSeq" id="NP_001347648.1">
    <molecule id="Q76N33-1"/>
    <property type="nucleotide sequence ID" value="NM_001360719.1"/>
</dbReference>
<dbReference type="RefSeq" id="NP_001347649.1">
    <molecule id="Q76N33-2"/>
    <property type="nucleotide sequence ID" value="NM_001360720.1"/>
</dbReference>
<dbReference type="RefSeq" id="NP_083958.3">
    <molecule id="Q76N33-1"/>
    <property type="nucleotide sequence ID" value="NM_029682.4"/>
</dbReference>
<dbReference type="RefSeq" id="XP_006527514.1">
    <molecule id="Q76N33-1"/>
    <property type="nucleotide sequence ID" value="XM_006527451.5"/>
</dbReference>
<dbReference type="RefSeq" id="XP_006527515.1">
    <molecule id="Q76N33-1"/>
    <property type="nucleotide sequence ID" value="XM_006527452.5"/>
</dbReference>
<dbReference type="RefSeq" id="XP_006527516.1">
    <property type="nucleotide sequence ID" value="XM_006527453.3"/>
</dbReference>
<dbReference type="RefSeq" id="XP_006527517.1">
    <property type="nucleotide sequence ID" value="XM_006527454.3"/>
</dbReference>
<dbReference type="RefSeq" id="XP_006527519.1">
    <property type="nucleotide sequence ID" value="XM_006527456.3"/>
</dbReference>
<dbReference type="RefSeq" id="XP_006527520.1">
    <property type="nucleotide sequence ID" value="XM_006527457.3"/>
</dbReference>
<dbReference type="RefSeq" id="XP_017173797.1">
    <property type="nucleotide sequence ID" value="XM_017318308.1"/>
</dbReference>
<dbReference type="SMR" id="Q76N33"/>
<dbReference type="BioGRID" id="218219">
    <property type="interactions" value="1"/>
</dbReference>
<dbReference type="FunCoup" id="Q76N33">
    <property type="interactions" value="517"/>
</dbReference>
<dbReference type="STRING" id="10090.ENSMUSP00000059927"/>
<dbReference type="MEROPS" id="M67.003"/>
<dbReference type="iPTMnet" id="Q76N33"/>
<dbReference type="PhosphoSitePlus" id="Q76N33"/>
<dbReference type="jPOST" id="Q76N33"/>
<dbReference type="PaxDb" id="10090-ENSMUSP00000059927"/>
<dbReference type="PeptideAtlas" id="Q76N33"/>
<dbReference type="ProteomicsDB" id="258635">
    <molecule id="Q76N33-1"/>
</dbReference>
<dbReference type="ProteomicsDB" id="258636">
    <molecule id="Q76N33-2"/>
</dbReference>
<dbReference type="Pumba" id="Q76N33"/>
<dbReference type="Antibodypedia" id="45641">
    <property type="antibodies" value="109 antibodies from 22 providers"/>
</dbReference>
<dbReference type="DNASU" id="76630"/>
<dbReference type="Ensembl" id="ENSMUST00000054956.15">
    <molecule id="Q76N33-1"/>
    <property type="protein sequence ID" value="ENSMUSP00000059927.9"/>
    <property type="gene ID" value="ENSMUSG00000024776.19"/>
</dbReference>
<dbReference type="Ensembl" id="ENSMUST00000119603.2">
    <molecule id="Q76N33-1"/>
    <property type="protein sequence ID" value="ENSMUSP00000112938.2"/>
    <property type="gene ID" value="ENSMUSG00000024776.19"/>
</dbReference>
<dbReference type="Ensembl" id="ENSMUST00000239240.2">
    <molecule id="Q76N33-1"/>
    <property type="protein sequence ID" value="ENSMUSP00000159218.2"/>
    <property type="gene ID" value="ENSMUSG00000024776.19"/>
</dbReference>
<dbReference type="GeneID" id="76630"/>
<dbReference type="KEGG" id="mmu:76630"/>
<dbReference type="UCSC" id="uc008hgc.1">
    <molecule id="Q76N33-1"/>
    <property type="organism name" value="mouse"/>
</dbReference>
<dbReference type="AGR" id="MGI:1923880"/>
<dbReference type="CTD" id="57559"/>
<dbReference type="MGI" id="MGI:1923880">
    <property type="gene designation" value="Stambpl1"/>
</dbReference>
<dbReference type="VEuPathDB" id="HostDB:ENSMUSG00000024776"/>
<dbReference type="eggNOG" id="KOG2880">
    <property type="taxonomic scope" value="Eukaryota"/>
</dbReference>
<dbReference type="GeneTree" id="ENSGT00940000153710"/>
<dbReference type="HOGENOM" id="CLU_023304_0_1_1"/>
<dbReference type="InParanoid" id="Q76N33"/>
<dbReference type="OMA" id="QHKNKCK"/>
<dbReference type="OrthoDB" id="3640at2759"/>
<dbReference type="PhylomeDB" id="Q76N33"/>
<dbReference type="TreeFam" id="TF323215"/>
<dbReference type="Reactome" id="R-MMU-5689901">
    <property type="pathway name" value="Metalloprotease DUBs"/>
</dbReference>
<dbReference type="BioGRID-ORCS" id="76630">
    <property type="hits" value="3 hits in 79 CRISPR screens"/>
</dbReference>
<dbReference type="ChiTaRS" id="Stambpl1">
    <property type="organism name" value="mouse"/>
</dbReference>
<dbReference type="PRO" id="PR:Q76N33"/>
<dbReference type="Proteomes" id="UP000000589">
    <property type="component" value="Chromosome 19"/>
</dbReference>
<dbReference type="RNAct" id="Q76N33">
    <property type="molecule type" value="protein"/>
</dbReference>
<dbReference type="Bgee" id="ENSMUSG00000024776">
    <property type="expression patterns" value="Expressed in spermatid and 213 other cell types or tissues"/>
</dbReference>
<dbReference type="ExpressionAtlas" id="Q76N33">
    <property type="expression patterns" value="baseline and differential"/>
</dbReference>
<dbReference type="GO" id="GO:0061578">
    <property type="term" value="F:K63-linked deubiquitinase activity"/>
    <property type="evidence" value="ECO:0000250"/>
    <property type="project" value="UniProtKB"/>
</dbReference>
<dbReference type="GO" id="GO:0046872">
    <property type="term" value="F:metal ion binding"/>
    <property type="evidence" value="ECO:0007669"/>
    <property type="project" value="UniProtKB-KW"/>
</dbReference>
<dbReference type="GO" id="GO:0140492">
    <property type="term" value="F:metal-dependent deubiquitinase activity"/>
    <property type="evidence" value="ECO:0007669"/>
    <property type="project" value="InterPro"/>
</dbReference>
<dbReference type="GO" id="GO:0071233">
    <property type="term" value="P:cellular response to L-leucine"/>
    <property type="evidence" value="ECO:0007669"/>
    <property type="project" value="Ensembl"/>
</dbReference>
<dbReference type="GO" id="GO:1904263">
    <property type="term" value="P:positive regulation of TORC1 signaling"/>
    <property type="evidence" value="ECO:0007669"/>
    <property type="project" value="Ensembl"/>
</dbReference>
<dbReference type="GO" id="GO:0070536">
    <property type="term" value="P:protein K63-linked deubiquitination"/>
    <property type="evidence" value="ECO:0007669"/>
    <property type="project" value="InterPro"/>
</dbReference>
<dbReference type="GO" id="GO:0006508">
    <property type="term" value="P:proteolysis"/>
    <property type="evidence" value="ECO:0007669"/>
    <property type="project" value="UniProtKB-KW"/>
</dbReference>
<dbReference type="CDD" id="cd08066">
    <property type="entry name" value="MPN_AMSH_like"/>
    <property type="match status" value="1"/>
</dbReference>
<dbReference type="FunFam" id="1.20.58.80:FF:000012">
    <property type="entry name" value="AMSH-like protease isoform X1"/>
    <property type="match status" value="1"/>
</dbReference>
<dbReference type="FunFam" id="3.40.140.10:FF:000010">
    <property type="entry name" value="AMSH-like protease isoform X1"/>
    <property type="match status" value="1"/>
</dbReference>
<dbReference type="Gene3D" id="3.40.140.10">
    <property type="entry name" value="Cytidine Deaminase, domain 2"/>
    <property type="match status" value="1"/>
</dbReference>
<dbReference type="Gene3D" id="1.20.58.80">
    <property type="entry name" value="Phosphotransferase system, lactose/cellobiose-type IIA subunit"/>
    <property type="match status" value="1"/>
</dbReference>
<dbReference type="InterPro" id="IPR000555">
    <property type="entry name" value="JAMM/MPN+_dom"/>
</dbReference>
<dbReference type="InterPro" id="IPR037518">
    <property type="entry name" value="MPN"/>
</dbReference>
<dbReference type="InterPro" id="IPR044098">
    <property type="entry name" value="STAMBP/STALP-like_MPN"/>
</dbReference>
<dbReference type="InterPro" id="IPR015063">
    <property type="entry name" value="USP8_dimer"/>
</dbReference>
<dbReference type="PANTHER" id="PTHR12947">
    <property type="entry name" value="AMSH-LIKE PROTEASE"/>
    <property type="match status" value="1"/>
</dbReference>
<dbReference type="PANTHER" id="PTHR12947:SF7">
    <property type="entry name" value="AMSH-LIKE PROTEASE"/>
    <property type="match status" value="1"/>
</dbReference>
<dbReference type="Pfam" id="PF01398">
    <property type="entry name" value="JAB"/>
    <property type="match status" value="1"/>
</dbReference>
<dbReference type="Pfam" id="PF08969">
    <property type="entry name" value="USP8_dimer"/>
    <property type="match status" value="1"/>
</dbReference>
<dbReference type="SMART" id="SM00232">
    <property type="entry name" value="JAB_MPN"/>
    <property type="match status" value="1"/>
</dbReference>
<dbReference type="SUPFAM" id="SSF102712">
    <property type="entry name" value="JAB1/MPN domain"/>
    <property type="match status" value="1"/>
</dbReference>
<dbReference type="SUPFAM" id="SSF140856">
    <property type="entry name" value="USP8 N-terminal domain-like"/>
    <property type="match status" value="1"/>
</dbReference>
<dbReference type="PROSITE" id="PS50249">
    <property type="entry name" value="MPN"/>
    <property type="match status" value="1"/>
</dbReference>